<accession>Q8H1G6</accession>
<accession>Q94K67</accession>
<accession>Q9M9X8</accession>
<accession>Q9SHK8</accession>
<name>PTI11_ARATH</name>
<sequence>MRKWICCTCQIEDSNEEQQLKSSQQQSDANHKNSKPAPVAKHEVKKEALPIEVPPLSLDEVKEKTENFGSKALIGEGSYGRVYYATLNDGVAVALKKLDVAPEAETDTEFLSQVSMVSRLKHENLIQLLGFCVDGNLRVLAYEFATMGSLHDILHGRKGVQGAQPGPTLDWITRVKIAVEAARGLEYLHEKSQPPVIHRDIRSSNVLLFEDYKAKIADFNLSNQAPDNAARLHSTRVLGTFGYHAPEYAMTGQLTQKSDVYSFGVVLLELLTGRKPVDHTMPRGQQSLVTWATPRLSEDKVKQCIDPKLKADYPPKAVAKLAAVAALCVQYEAEFRPNMSIVVKALQPLLKPPAAAPAPES</sequence>
<organism>
    <name type="scientific">Arabidopsis thaliana</name>
    <name type="common">Mouse-ear cress</name>
    <dbReference type="NCBI Taxonomy" id="3702"/>
    <lineage>
        <taxon>Eukaryota</taxon>
        <taxon>Viridiplantae</taxon>
        <taxon>Streptophyta</taxon>
        <taxon>Embryophyta</taxon>
        <taxon>Tracheophyta</taxon>
        <taxon>Spermatophyta</taxon>
        <taxon>Magnoliopsida</taxon>
        <taxon>eudicotyledons</taxon>
        <taxon>Gunneridae</taxon>
        <taxon>Pentapetalae</taxon>
        <taxon>rosids</taxon>
        <taxon>malvids</taxon>
        <taxon>Brassicales</taxon>
        <taxon>Brassicaceae</taxon>
        <taxon>Camelineae</taxon>
        <taxon>Arabidopsis</taxon>
    </lineage>
</organism>
<dbReference type="EC" id="2.7.10.2"/>
<dbReference type="EMBL" id="AC007592">
    <property type="protein sequence ID" value="AAF24808.1"/>
    <property type="status" value="ALT_INIT"/>
    <property type="molecule type" value="Genomic_DNA"/>
</dbReference>
<dbReference type="EMBL" id="AC011001">
    <property type="protein sequence ID" value="AAF63147.1"/>
    <property type="status" value="ALT_SEQ"/>
    <property type="molecule type" value="Genomic_DNA"/>
</dbReference>
<dbReference type="EMBL" id="CP002684">
    <property type="protein sequence ID" value="AEE28025.1"/>
    <property type="molecule type" value="Genomic_DNA"/>
</dbReference>
<dbReference type="EMBL" id="CP002684">
    <property type="protein sequence ID" value="AEE28026.1"/>
    <property type="molecule type" value="Genomic_DNA"/>
</dbReference>
<dbReference type="EMBL" id="CP002684">
    <property type="protein sequence ID" value="ANM60512.1"/>
    <property type="molecule type" value="Genomic_DNA"/>
</dbReference>
<dbReference type="EMBL" id="AF370260">
    <property type="protein sequence ID" value="AAK44075.1"/>
    <property type="molecule type" value="mRNA"/>
</dbReference>
<dbReference type="EMBL" id="AY150374">
    <property type="protein sequence ID" value="AAN12919.1"/>
    <property type="molecule type" value="mRNA"/>
</dbReference>
<dbReference type="EMBL" id="AK317491">
    <property type="protein sequence ID" value="BAH20156.1"/>
    <property type="molecule type" value="mRNA"/>
</dbReference>
<dbReference type="PIR" id="F86201">
    <property type="entry name" value="F86201"/>
</dbReference>
<dbReference type="RefSeq" id="NP_001030981.1">
    <property type="nucleotide sequence ID" value="NM_001035904.2"/>
</dbReference>
<dbReference type="RefSeq" id="NP_001322793.1">
    <property type="nucleotide sequence ID" value="NM_001331644.1"/>
</dbReference>
<dbReference type="RefSeq" id="NP_172155.1">
    <property type="nucleotide sequence ID" value="NM_100547.3"/>
</dbReference>
<dbReference type="SMR" id="Q8H1G6"/>
<dbReference type="BioGRID" id="22421">
    <property type="interactions" value="6"/>
</dbReference>
<dbReference type="FunCoup" id="Q8H1G6">
    <property type="interactions" value="404"/>
</dbReference>
<dbReference type="IntAct" id="Q8H1G6">
    <property type="interactions" value="1"/>
</dbReference>
<dbReference type="MINT" id="Q8H1G6"/>
<dbReference type="STRING" id="3702.Q8H1G6"/>
<dbReference type="PaxDb" id="3702-AT1G06700.2"/>
<dbReference type="ProteomicsDB" id="224828"/>
<dbReference type="EnsemblPlants" id="AT1G06700.1">
    <property type="protein sequence ID" value="AT1G06700.1"/>
    <property type="gene ID" value="AT1G06700"/>
</dbReference>
<dbReference type="EnsemblPlants" id="AT1G06700.2">
    <property type="protein sequence ID" value="AT1G06700.2"/>
    <property type="gene ID" value="AT1G06700"/>
</dbReference>
<dbReference type="EnsemblPlants" id="AT1G06700.3">
    <property type="protein sequence ID" value="AT1G06700.3"/>
    <property type="gene ID" value="AT1G06700"/>
</dbReference>
<dbReference type="GeneID" id="837180"/>
<dbReference type="Gramene" id="AT1G06700.1">
    <property type="protein sequence ID" value="AT1G06700.1"/>
    <property type="gene ID" value="AT1G06700"/>
</dbReference>
<dbReference type="Gramene" id="AT1G06700.2">
    <property type="protein sequence ID" value="AT1G06700.2"/>
    <property type="gene ID" value="AT1G06700"/>
</dbReference>
<dbReference type="Gramene" id="AT1G06700.3">
    <property type="protein sequence ID" value="AT1G06700.3"/>
    <property type="gene ID" value="AT1G06700"/>
</dbReference>
<dbReference type="KEGG" id="ath:AT1G06700"/>
<dbReference type="Araport" id="AT1G06700"/>
<dbReference type="TAIR" id="AT1G06700"/>
<dbReference type="eggNOG" id="KOG1187">
    <property type="taxonomic scope" value="Eukaryota"/>
</dbReference>
<dbReference type="HOGENOM" id="CLU_000288_21_4_1"/>
<dbReference type="InParanoid" id="Q8H1G6"/>
<dbReference type="OMA" id="ANICIED"/>
<dbReference type="OrthoDB" id="4062651at2759"/>
<dbReference type="PhylomeDB" id="Q8H1G6"/>
<dbReference type="CD-CODE" id="4299E36E">
    <property type="entry name" value="Nucleolus"/>
</dbReference>
<dbReference type="PRO" id="PR:Q8H1G6"/>
<dbReference type="Proteomes" id="UP000006548">
    <property type="component" value="Chromosome 1"/>
</dbReference>
<dbReference type="ExpressionAtlas" id="Q8H1G6">
    <property type="expression patterns" value="baseline and differential"/>
</dbReference>
<dbReference type="GO" id="GO:0005886">
    <property type="term" value="C:plasma membrane"/>
    <property type="evidence" value="ECO:0007005"/>
    <property type="project" value="TAIR"/>
</dbReference>
<dbReference type="GO" id="GO:0009506">
    <property type="term" value="C:plasmodesma"/>
    <property type="evidence" value="ECO:0007005"/>
    <property type="project" value="TAIR"/>
</dbReference>
<dbReference type="GO" id="GO:0005524">
    <property type="term" value="F:ATP binding"/>
    <property type="evidence" value="ECO:0007669"/>
    <property type="project" value="UniProtKB-KW"/>
</dbReference>
<dbReference type="GO" id="GO:0004715">
    <property type="term" value="F:non-membrane spanning protein tyrosine kinase activity"/>
    <property type="evidence" value="ECO:0007669"/>
    <property type="project" value="UniProtKB-EC"/>
</dbReference>
<dbReference type="GO" id="GO:0019901">
    <property type="term" value="F:protein kinase binding"/>
    <property type="evidence" value="ECO:0000353"/>
    <property type="project" value="UniProtKB"/>
</dbReference>
<dbReference type="FunFam" id="1.10.510.10:FF:000103">
    <property type="entry name" value="PTI1-like tyrosine-protein kinase 3"/>
    <property type="match status" value="1"/>
</dbReference>
<dbReference type="FunFam" id="3.30.200.20:FF:000182">
    <property type="entry name" value="PTI1-like tyrosine-protein kinase 3"/>
    <property type="match status" value="1"/>
</dbReference>
<dbReference type="Gene3D" id="3.30.200.20">
    <property type="entry name" value="Phosphorylase Kinase, domain 1"/>
    <property type="match status" value="1"/>
</dbReference>
<dbReference type="Gene3D" id="1.10.510.10">
    <property type="entry name" value="Transferase(Phosphotransferase) domain 1"/>
    <property type="match status" value="1"/>
</dbReference>
<dbReference type="InterPro" id="IPR011009">
    <property type="entry name" value="Kinase-like_dom_sf"/>
</dbReference>
<dbReference type="InterPro" id="IPR052101">
    <property type="entry name" value="Plant_StressResp_Kinase"/>
</dbReference>
<dbReference type="InterPro" id="IPR000719">
    <property type="entry name" value="Prot_kinase_dom"/>
</dbReference>
<dbReference type="InterPro" id="IPR017441">
    <property type="entry name" value="Protein_kinase_ATP_BS"/>
</dbReference>
<dbReference type="InterPro" id="IPR001245">
    <property type="entry name" value="Ser-Thr/Tyr_kinase_cat_dom"/>
</dbReference>
<dbReference type="InterPro" id="IPR008266">
    <property type="entry name" value="Tyr_kinase_AS"/>
</dbReference>
<dbReference type="InterPro" id="IPR020635">
    <property type="entry name" value="Tyr_kinase_cat_dom"/>
</dbReference>
<dbReference type="PANTHER" id="PTHR47983:SF36">
    <property type="entry name" value="PTI1-LIKE TYROSINE-PROTEIN KINASE 1"/>
    <property type="match status" value="1"/>
</dbReference>
<dbReference type="PANTHER" id="PTHR47983">
    <property type="entry name" value="PTO-INTERACTING PROTEIN 1-LIKE"/>
    <property type="match status" value="1"/>
</dbReference>
<dbReference type="Pfam" id="PF07714">
    <property type="entry name" value="PK_Tyr_Ser-Thr"/>
    <property type="match status" value="1"/>
</dbReference>
<dbReference type="PIRSF" id="PIRSF000654">
    <property type="entry name" value="Integrin-linked_kinase"/>
    <property type="match status" value="1"/>
</dbReference>
<dbReference type="SMART" id="SM00219">
    <property type="entry name" value="TyrKc"/>
    <property type="match status" value="1"/>
</dbReference>
<dbReference type="SUPFAM" id="SSF56112">
    <property type="entry name" value="Protein kinase-like (PK-like)"/>
    <property type="match status" value="1"/>
</dbReference>
<dbReference type="PROSITE" id="PS00107">
    <property type="entry name" value="PROTEIN_KINASE_ATP"/>
    <property type="match status" value="1"/>
</dbReference>
<dbReference type="PROSITE" id="PS50011">
    <property type="entry name" value="PROTEIN_KINASE_DOM"/>
    <property type="match status" value="1"/>
</dbReference>
<dbReference type="PROSITE" id="PS00109">
    <property type="entry name" value="PROTEIN_KINASE_TYR"/>
    <property type="match status" value="1"/>
</dbReference>
<feature type="chain" id="PRO_0000403322" description="PTI1-like tyrosine-protein kinase 1">
    <location>
        <begin position="1"/>
        <end position="361"/>
    </location>
</feature>
<feature type="domain" description="Protein kinase" evidence="1">
    <location>
        <begin position="68"/>
        <end position="350"/>
    </location>
</feature>
<feature type="region of interest" description="Disordered" evidence="3">
    <location>
        <begin position="16"/>
        <end position="43"/>
    </location>
</feature>
<feature type="active site" description="Proton acceptor" evidence="1 2">
    <location>
        <position position="200"/>
    </location>
</feature>
<feature type="binding site" evidence="1">
    <location>
        <begin position="74"/>
        <end position="82"/>
    </location>
    <ligand>
        <name>ATP</name>
        <dbReference type="ChEBI" id="CHEBI:30616"/>
    </ligand>
</feature>
<feature type="binding site" evidence="1">
    <location>
        <position position="96"/>
    </location>
    <ligand>
        <name>ATP</name>
        <dbReference type="ChEBI" id="CHEBI:30616"/>
    </ligand>
</feature>
<feature type="sequence conflict" description="In Ref. 3; AAK44075." evidence="5" ref="3">
    <original>V</original>
    <variation>A</variation>
    <location>
        <position position="343"/>
    </location>
</feature>
<reference key="1">
    <citation type="journal article" date="2000" name="Nature">
        <title>Sequence and analysis of chromosome 1 of the plant Arabidopsis thaliana.</title>
        <authorList>
            <person name="Theologis A."/>
            <person name="Ecker J.R."/>
            <person name="Palm C.J."/>
            <person name="Federspiel N.A."/>
            <person name="Kaul S."/>
            <person name="White O."/>
            <person name="Alonso J."/>
            <person name="Altafi H."/>
            <person name="Araujo R."/>
            <person name="Bowman C.L."/>
            <person name="Brooks S.Y."/>
            <person name="Buehler E."/>
            <person name="Chan A."/>
            <person name="Chao Q."/>
            <person name="Chen H."/>
            <person name="Cheuk R.F."/>
            <person name="Chin C.W."/>
            <person name="Chung M.K."/>
            <person name="Conn L."/>
            <person name="Conway A.B."/>
            <person name="Conway A.R."/>
            <person name="Creasy T.H."/>
            <person name="Dewar K."/>
            <person name="Dunn P."/>
            <person name="Etgu P."/>
            <person name="Feldblyum T.V."/>
            <person name="Feng J.-D."/>
            <person name="Fong B."/>
            <person name="Fujii C.Y."/>
            <person name="Gill J.E."/>
            <person name="Goldsmith A.D."/>
            <person name="Haas B."/>
            <person name="Hansen N.F."/>
            <person name="Hughes B."/>
            <person name="Huizar L."/>
            <person name="Hunter J.L."/>
            <person name="Jenkins J."/>
            <person name="Johnson-Hopson C."/>
            <person name="Khan S."/>
            <person name="Khaykin E."/>
            <person name="Kim C.J."/>
            <person name="Koo H.L."/>
            <person name="Kremenetskaia I."/>
            <person name="Kurtz D.B."/>
            <person name="Kwan A."/>
            <person name="Lam B."/>
            <person name="Langin-Hooper S."/>
            <person name="Lee A."/>
            <person name="Lee J.M."/>
            <person name="Lenz C.A."/>
            <person name="Li J.H."/>
            <person name="Li Y.-P."/>
            <person name="Lin X."/>
            <person name="Liu S.X."/>
            <person name="Liu Z.A."/>
            <person name="Luros J.S."/>
            <person name="Maiti R."/>
            <person name="Marziali A."/>
            <person name="Militscher J."/>
            <person name="Miranda M."/>
            <person name="Nguyen M."/>
            <person name="Nierman W.C."/>
            <person name="Osborne B.I."/>
            <person name="Pai G."/>
            <person name="Peterson J."/>
            <person name="Pham P.K."/>
            <person name="Rizzo M."/>
            <person name="Rooney T."/>
            <person name="Rowley D."/>
            <person name="Sakano H."/>
            <person name="Salzberg S.L."/>
            <person name="Schwartz J.R."/>
            <person name="Shinn P."/>
            <person name="Southwick A.M."/>
            <person name="Sun H."/>
            <person name="Tallon L.J."/>
            <person name="Tambunga G."/>
            <person name="Toriumi M.J."/>
            <person name="Town C.D."/>
            <person name="Utterback T."/>
            <person name="Van Aken S."/>
            <person name="Vaysberg M."/>
            <person name="Vysotskaia V.S."/>
            <person name="Walker M."/>
            <person name="Wu D."/>
            <person name="Yu G."/>
            <person name="Fraser C.M."/>
            <person name="Venter J.C."/>
            <person name="Davis R.W."/>
        </authorList>
    </citation>
    <scope>NUCLEOTIDE SEQUENCE [LARGE SCALE GENOMIC DNA]</scope>
    <source>
        <strain>cv. Columbia</strain>
    </source>
</reference>
<reference key="2">
    <citation type="journal article" date="2017" name="Plant J.">
        <title>Araport11: a complete reannotation of the Arabidopsis thaliana reference genome.</title>
        <authorList>
            <person name="Cheng C.Y."/>
            <person name="Krishnakumar V."/>
            <person name="Chan A.P."/>
            <person name="Thibaud-Nissen F."/>
            <person name="Schobel S."/>
            <person name="Town C.D."/>
        </authorList>
    </citation>
    <scope>GENOME REANNOTATION</scope>
    <source>
        <strain>cv. Columbia</strain>
    </source>
</reference>
<reference key="3">
    <citation type="journal article" date="2003" name="Science">
        <title>Empirical analysis of transcriptional activity in the Arabidopsis genome.</title>
        <authorList>
            <person name="Yamada K."/>
            <person name="Lim J."/>
            <person name="Dale J.M."/>
            <person name="Chen H."/>
            <person name="Shinn P."/>
            <person name="Palm C.J."/>
            <person name="Southwick A.M."/>
            <person name="Wu H.C."/>
            <person name="Kim C.J."/>
            <person name="Nguyen M."/>
            <person name="Pham P.K."/>
            <person name="Cheuk R.F."/>
            <person name="Karlin-Newmann G."/>
            <person name="Liu S.X."/>
            <person name="Lam B."/>
            <person name="Sakano H."/>
            <person name="Wu T."/>
            <person name="Yu G."/>
            <person name="Miranda M."/>
            <person name="Quach H.L."/>
            <person name="Tripp M."/>
            <person name="Chang C.H."/>
            <person name="Lee J.M."/>
            <person name="Toriumi M.J."/>
            <person name="Chan M.M."/>
            <person name="Tang C.C."/>
            <person name="Onodera C.S."/>
            <person name="Deng J.M."/>
            <person name="Akiyama K."/>
            <person name="Ansari Y."/>
            <person name="Arakawa T."/>
            <person name="Banh J."/>
            <person name="Banno F."/>
            <person name="Bowser L."/>
            <person name="Brooks S.Y."/>
            <person name="Carninci P."/>
            <person name="Chao Q."/>
            <person name="Choy N."/>
            <person name="Enju A."/>
            <person name="Goldsmith A.D."/>
            <person name="Gurjal M."/>
            <person name="Hansen N.F."/>
            <person name="Hayashizaki Y."/>
            <person name="Johnson-Hopson C."/>
            <person name="Hsuan V.W."/>
            <person name="Iida K."/>
            <person name="Karnes M."/>
            <person name="Khan S."/>
            <person name="Koesema E."/>
            <person name="Ishida J."/>
            <person name="Jiang P.X."/>
            <person name="Jones T."/>
            <person name="Kawai J."/>
            <person name="Kamiya A."/>
            <person name="Meyers C."/>
            <person name="Nakajima M."/>
            <person name="Narusaka M."/>
            <person name="Seki M."/>
            <person name="Sakurai T."/>
            <person name="Satou M."/>
            <person name="Tamse R."/>
            <person name="Vaysberg M."/>
            <person name="Wallender E.K."/>
            <person name="Wong C."/>
            <person name="Yamamura Y."/>
            <person name="Yuan S."/>
            <person name="Shinozaki K."/>
            <person name="Davis R.W."/>
            <person name="Theologis A."/>
            <person name="Ecker J.R."/>
        </authorList>
    </citation>
    <scope>NUCLEOTIDE SEQUENCE [LARGE SCALE MRNA]</scope>
    <source>
        <strain>cv. Columbia</strain>
    </source>
</reference>
<reference key="4">
    <citation type="journal article" date="2009" name="DNA Res.">
        <title>Analysis of multiple occurrences of alternative splicing events in Arabidopsis thaliana using novel sequenced full-length cDNAs.</title>
        <authorList>
            <person name="Iida K."/>
            <person name="Fukami-Kobayashi K."/>
            <person name="Toyoda A."/>
            <person name="Sakaki Y."/>
            <person name="Kobayashi M."/>
            <person name="Seki M."/>
            <person name="Shinozaki K."/>
        </authorList>
    </citation>
    <scope>NUCLEOTIDE SEQUENCE [LARGE SCALE MRNA]</scope>
    <source>
        <strain>cv. Columbia</strain>
        <tissue>Root</tissue>
    </source>
</reference>
<reference key="5">
    <citation type="journal article" date="2006" name="J. Biol. Chem.">
        <title>The Arabidopsis protein kinase PTI1-2 is activated by convergent phosphatidic acid and oxidative stress signaling pathways downstream of PDK1 and OXI1.</title>
        <authorList>
            <person name="Anthony R.G."/>
            <person name="Khan S."/>
            <person name="Costa J."/>
            <person name="Pais M.S."/>
            <person name="Boegre L."/>
        </authorList>
    </citation>
    <scope>INTERACTION WITH OXI1</scope>
    <scope>AUTOPHOSPHORYLATION</scope>
    <scope>PHOSPHORYLATION BY OXI1</scope>
</reference>
<reference key="6">
    <citation type="journal article" date="2007" name="Mol. Cell. Proteomics">
        <title>A high content in lipid-modified peripheral proteins and integral receptor kinases features in the arabidopsis plasma membrane proteome.</title>
        <authorList>
            <person name="Marmagne A."/>
            <person name="Ferro M."/>
            <person name="Meinnel T."/>
            <person name="Bruley C."/>
            <person name="Kuhn L."/>
            <person name="Garin J."/>
            <person name="Barbier-Brygoo H."/>
            <person name="Ephritikhine G."/>
        </authorList>
    </citation>
    <scope>IDENTIFICATION BY MASS SPECTROMETRY</scope>
    <scope>SUBCELLULAR LOCATION [LARGE SCALE ANALYSIS]</scope>
</reference>
<proteinExistence type="evidence at protein level"/>
<protein>
    <recommendedName>
        <fullName>PTI1-like tyrosine-protein kinase 1</fullName>
        <shortName>PTI1-1</shortName>
        <ecNumber>2.7.10.2</ecNumber>
    </recommendedName>
</protein>
<comment type="catalytic activity">
    <reaction evidence="2">
        <text>L-tyrosyl-[protein] + ATP = O-phospho-L-tyrosyl-[protein] + ADP + H(+)</text>
        <dbReference type="Rhea" id="RHEA:10596"/>
        <dbReference type="Rhea" id="RHEA-COMP:10136"/>
        <dbReference type="Rhea" id="RHEA-COMP:20101"/>
        <dbReference type="ChEBI" id="CHEBI:15378"/>
        <dbReference type="ChEBI" id="CHEBI:30616"/>
        <dbReference type="ChEBI" id="CHEBI:46858"/>
        <dbReference type="ChEBI" id="CHEBI:61978"/>
        <dbReference type="ChEBI" id="CHEBI:456216"/>
        <dbReference type="EC" id="2.7.10.2"/>
    </reaction>
</comment>
<comment type="subunit">
    <text evidence="4">Interacts with OXI1.</text>
</comment>
<comment type="subcellular location">
    <subcellularLocation>
        <location evidence="6">Cell membrane</location>
        <topology evidence="6">Peripheral membrane protein</topology>
    </subcellularLocation>
</comment>
<comment type="PTM">
    <text evidence="4">Autophosphorylated and phosphorylated by OXI1.</text>
</comment>
<comment type="similarity">
    <text evidence="1">Belongs to the protein kinase superfamily. Tyr protein kinase family.</text>
</comment>
<comment type="sequence caution" evidence="5">
    <conflict type="erroneous initiation">
        <sequence resource="EMBL-CDS" id="AAF24808"/>
    </conflict>
    <text>Truncated N-terminus.</text>
</comment>
<comment type="sequence caution" evidence="5">
    <conflict type="erroneous gene model prediction">
        <sequence resource="EMBL-CDS" id="AAF63147"/>
    </conflict>
</comment>
<comment type="online information" name="Arabidopsis protein tyrosine kinases">
    <link uri="http://www.bio.unipd.it/molbinfo/PTKtable.html"/>
</comment>
<evidence type="ECO:0000255" key="1">
    <source>
        <dbReference type="PROSITE-ProRule" id="PRU00159"/>
    </source>
</evidence>
<evidence type="ECO:0000255" key="2">
    <source>
        <dbReference type="PROSITE-ProRule" id="PRU10028"/>
    </source>
</evidence>
<evidence type="ECO:0000256" key="3">
    <source>
        <dbReference type="SAM" id="MobiDB-lite"/>
    </source>
</evidence>
<evidence type="ECO:0000269" key="4">
    <source>
    </source>
</evidence>
<evidence type="ECO:0000305" key="5"/>
<evidence type="ECO:0000305" key="6">
    <source>
    </source>
</evidence>
<gene>
    <name type="primary">PTI11</name>
    <name type="ordered locus">At1g06700</name>
    <name type="ORF">F12K11.1</name>
    <name type="ORF">F4H5.21</name>
</gene>
<keyword id="KW-0067">ATP-binding</keyword>
<keyword id="KW-1003">Cell membrane</keyword>
<keyword id="KW-0418">Kinase</keyword>
<keyword id="KW-0472">Membrane</keyword>
<keyword id="KW-0547">Nucleotide-binding</keyword>
<keyword id="KW-0597">Phosphoprotein</keyword>
<keyword id="KW-1185">Reference proteome</keyword>
<keyword id="KW-0808">Transferase</keyword>
<keyword id="KW-0829">Tyrosine-protein kinase</keyword>